<protein>
    <recommendedName>
        <fullName evidence="6">Velvet complex subunit B</fullName>
    </recommendedName>
</protein>
<name>VELB_GIBZE</name>
<comment type="function">
    <text evidence="1 4">Component of the velvet transcription factor complex that controls sexual/asexual developmental ratio in response to light, promoting sexual development in the darkness while stimulating asexual sporulation under illumination (By similarity). The velvet complex acts as a global regulator for secondary metabolite gene expression (By similarity). Component of the velB-VosA heterodimeric complex that plays a dual role in activating genes associated with spore maturation and repressing certain development-associated genes (By similarity). The complex binds DNA through the DNA-binding domain of vosA that recognizes an 11-nucleotide consensus sequence 5'-CTGGCCGCGGC-3' consisting of two motifs in the promoters of key developmental regulatory genes (By similarity). Controls the expression of the pink pigment aurofusarin and the mycotoxin deoxynivalenol gene clusters (PubMed:22713714). Regulates hyphae formation, hyphal hydrophobicity and conidiation (PubMed:22713714). Regulates of cell wall integrity and pathogenicity (PubMed:22713714).</text>
</comment>
<comment type="subunit">
    <text evidence="1">Component of the heterotrimeric velvet complex composed of laeA, veA and velB; VeA acting as a bridging protein between laeA and velB (By similarity). Forms a heterodimeric complex with vosA; the formation of the velB-vosA complex is light-dependent (By similarity).</text>
</comment>
<comment type="subcellular location">
    <subcellularLocation>
        <location evidence="1">Nucleus</location>
    </subcellularLocation>
    <subcellularLocation>
        <location evidence="1">Cytoplasm</location>
    </subcellularLocation>
    <text evidence="1">Nuclear localization is mediated by veA (By similarity).</text>
</comment>
<comment type="disruption phenotype">
    <text evidence="4">Exhibits reduced pink pigment formation, but increased yellow pigment production (PubMed:22713714). Down-regulates the six genes involved in biosynthesis of the pink pigment aurofusarin (PubMed:22713714). Also down-regulates the genes involved in the mycotoxin deoxynivalenol biosynthesis (PubMed:22713714). Suppresses of aerial hyphae formation, reduces hyphal hydrophobicity and highly increases conidiation (PubMed:22713714). Impaired virulence on flowering wheat head (PubMed:22713714).</text>
</comment>
<comment type="similarity">
    <text evidence="6">Belongs to the velvet family. VelB subfamily.</text>
</comment>
<comment type="sequence caution" evidence="6">
    <conflict type="erroneous gene model prediction">
        <sequence resource="EMBL-CDS" id="ESU06669"/>
    </conflict>
</comment>
<dbReference type="EMBL" id="DS231663">
    <property type="protein sequence ID" value="ESU06669.1"/>
    <property type="status" value="ALT_SEQ"/>
    <property type="molecule type" value="Genomic_DNA"/>
</dbReference>
<dbReference type="EMBL" id="HG970332">
    <property type="protein sequence ID" value="SCB64226.1"/>
    <property type="molecule type" value="Genomic_DNA"/>
</dbReference>
<dbReference type="RefSeq" id="XP_011317154.1">
    <property type="nucleotide sequence ID" value="XM_011318852.1"/>
</dbReference>
<dbReference type="SMR" id="I1RCN9"/>
<dbReference type="STRING" id="229533.I1RCN9"/>
<dbReference type="GeneID" id="23548805"/>
<dbReference type="KEGG" id="fgr:FGSG_01362"/>
<dbReference type="VEuPathDB" id="FungiDB:FGRAMPH1_01G03357"/>
<dbReference type="eggNOG" id="ENOG502S1B4">
    <property type="taxonomic scope" value="Eukaryota"/>
</dbReference>
<dbReference type="HOGENOM" id="CLU_149542_0_0_1"/>
<dbReference type="InParanoid" id="I1RCN9"/>
<dbReference type="OrthoDB" id="133567at110618"/>
<dbReference type="PHI-base" id="PHI:2427"/>
<dbReference type="Proteomes" id="UP000070720">
    <property type="component" value="Chromosome 1"/>
</dbReference>
<dbReference type="GO" id="GO:0005737">
    <property type="term" value="C:cytoplasm"/>
    <property type="evidence" value="ECO:0007669"/>
    <property type="project" value="UniProtKB-SubCell"/>
</dbReference>
<dbReference type="GO" id="GO:0005634">
    <property type="term" value="C:nucleus"/>
    <property type="evidence" value="ECO:0007669"/>
    <property type="project" value="UniProtKB-SubCell"/>
</dbReference>
<dbReference type="GO" id="GO:0030435">
    <property type="term" value="P:sporulation resulting in formation of a cellular spore"/>
    <property type="evidence" value="ECO:0007669"/>
    <property type="project" value="UniProtKB-KW"/>
</dbReference>
<dbReference type="Gene3D" id="2.60.40.3960">
    <property type="entry name" value="Velvet domain"/>
    <property type="match status" value="1"/>
</dbReference>
<dbReference type="InterPro" id="IPR021740">
    <property type="entry name" value="Velvet"/>
</dbReference>
<dbReference type="InterPro" id="IPR037525">
    <property type="entry name" value="Velvet_dom"/>
</dbReference>
<dbReference type="InterPro" id="IPR038491">
    <property type="entry name" value="Velvet_dom_sf"/>
</dbReference>
<dbReference type="PANTHER" id="PTHR33572">
    <property type="entry name" value="SPORE DEVELOPMENT REGULATOR VOSA"/>
    <property type="match status" value="1"/>
</dbReference>
<dbReference type="PANTHER" id="PTHR33572:SF3">
    <property type="entry name" value="VELVET COMPLEX SUBUNIT B"/>
    <property type="match status" value="1"/>
</dbReference>
<dbReference type="Pfam" id="PF11754">
    <property type="entry name" value="Velvet"/>
    <property type="match status" value="1"/>
</dbReference>
<dbReference type="PROSITE" id="PS51821">
    <property type="entry name" value="VELVET"/>
    <property type="match status" value="1"/>
</dbReference>
<evidence type="ECO:0000250" key="1">
    <source>
        <dbReference type="UniProtKB" id="C8VTS4"/>
    </source>
</evidence>
<evidence type="ECO:0000255" key="2">
    <source>
        <dbReference type="PROSITE-ProRule" id="PRU01165"/>
    </source>
</evidence>
<evidence type="ECO:0000256" key="3">
    <source>
        <dbReference type="SAM" id="MobiDB-lite"/>
    </source>
</evidence>
<evidence type="ECO:0000269" key="4">
    <source>
    </source>
</evidence>
<evidence type="ECO:0000303" key="5">
    <source>
    </source>
</evidence>
<evidence type="ECO:0000305" key="6"/>
<organism>
    <name type="scientific">Gibberella zeae (strain ATCC MYA-4620 / CBS 123657 / FGSC 9075 / NRRL 31084 / PH-1)</name>
    <name type="common">Wheat head blight fungus</name>
    <name type="synonym">Fusarium graminearum</name>
    <dbReference type="NCBI Taxonomy" id="229533"/>
    <lineage>
        <taxon>Eukaryota</taxon>
        <taxon>Fungi</taxon>
        <taxon>Dikarya</taxon>
        <taxon>Ascomycota</taxon>
        <taxon>Pezizomycotina</taxon>
        <taxon>Sordariomycetes</taxon>
        <taxon>Hypocreomycetidae</taxon>
        <taxon>Hypocreales</taxon>
        <taxon>Nectriaceae</taxon>
        <taxon>Fusarium</taxon>
    </lineage>
</organism>
<keyword id="KW-0963">Cytoplasm</keyword>
<keyword id="KW-0539">Nucleus</keyword>
<keyword id="KW-1185">Reference proteome</keyword>
<keyword id="KW-0749">Sporulation</keyword>
<keyword id="KW-0804">Transcription</keyword>
<keyword id="KW-0805">Transcription regulation</keyword>
<proteinExistence type="inferred from homology"/>
<accession>I1RCN9</accession>
<accession>A0A098D3H3</accession>
<accession>A0A0E0RQF8</accession>
<accession>A0A1C3YIP7</accession>
<gene>
    <name evidence="5" type="primary">velB</name>
    <name type="ORF">FGRAMPH1_01T03357</name>
    <name type="ORF">FGRRES_15845</name>
    <name type="ORF">FGSG_01362</name>
</gene>
<sequence length="470" mass="51548">MNSSYHPPDMSQRMPGPGYSSSVPPPIHAYQQQQQHQHPPPSLLPPPPTQHHHSSHAPPPPPPPSSSSHSLSSHQHHAPPPPHHHSQLPPYPPTQYQQPHPNQYPRPHPLPPSRNDEPPPPSSEPSPSDQHEKPKYEPPSVSKIEEGTGLKYSLDVQQQPIRARMCGFGDKDRRPITPPPCVRLVIINSETGKEVDYNTLDHAMFVLSVDLWDKDGIKEVNLVRSSTGPGSGASSNNYSYSTLEPSTPSYQQQALPPSRESGYPQGQGLGYAQEYPPSVQQGYGQAPSYQSSSSYGPPQQYFPRHSGYNTDPPASSANPLFRNGYGQDQNALTRMAVVGTQPQGMFTRNLIGSLAASAFRLNDTDKKAGIWFVLQDLSVRTEGTFRLRFSFVNVGGAGGGLPIHVNQGRAPILASCYSQDFSVYSAKKFPGVCESTPLSKTFALQGIKIPIRKDTNIKGEGDEEMMYDQN</sequence>
<reference key="1">
    <citation type="journal article" date="2007" name="Science">
        <title>The Fusarium graminearum genome reveals a link between localized polymorphism and pathogen specialization.</title>
        <authorList>
            <person name="Cuomo C.A."/>
            <person name="Gueldener U."/>
            <person name="Xu J.-R."/>
            <person name="Trail F."/>
            <person name="Turgeon B.G."/>
            <person name="Di Pietro A."/>
            <person name="Walton J.D."/>
            <person name="Ma L.-J."/>
            <person name="Baker S.E."/>
            <person name="Rep M."/>
            <person name="Adam G."/>
            <person name="Antoniw J."/>
            <person name="Baldwin T."/>
            <person name="Calvo S.E."/>
            <person name="Chang Y.-L."/>
            <person name="DeCaprio D."/>
            <person name="Gale L.R."/>
            <person name="Gnerre S."/>
            <person name="Goswami R.S."/>
            <person name="Hammond-Kosack K."/>
            <person name="Harris L.J."/>
            <person name="Hilburn K."/>
            <person name="Kennell J.C."/>
            <person name="Kroken S."/>
            <person name="Magnuson J.K."/>
            <person name="Mannhaupt G."/>
            <person name="Mauceli E.W."/>
            <person name="Mewes H.-W."/>
            <person name="Mitterbauer R."/>
            <person name="Muehlbauer G."/>
            <person name="Muensterkoetter M."/>
            <person name="Nelson D."/>
            <person name="O'Donnell K."/>
            <person name="Ouellet T."/>
            <person name="Qi W."/>
            <person name="Quesneville H."/>
            <person name="Roncero M.I.G."/>
            <person name="Seong K.-Y."/>
            <person name="Tetko I.V."/>
            <person name="Urban M."/>
            <person name="Waalwijk C."/>
            <person name="Ward T.J."/>
            <person name="Yao J."/>
            <person name="Birren B.W."/>
            <person name="Kistler H.C."/>
        </authorList>
    </citation>
    <scope>NUCLEOTIDE SEQUENCE [LARGE SCALE GENOMIC DNA]</scope>
    <source>
        <strain>ATCC MYA-4620 / CBS 123657 / FGSC 9075 / NRRL 31084 / PH-1</strain>
    </source>
</reference>
<reference key="2">
    <citation type="journal article" date="2010" name="Nature">
        <title>Comparative genomics reveals mobile pathogenicity chromosomes in Fusarium.</title>
        <authorList>
            <person name="Ma L.-J."/>
            <person name="van der Does H.C."/>
            <person name="Borkovich K.A."/>
            <person name="Coleman J.J."/>
            <person name="Daboussi M.-J."/>
            <person name="Di Pietro A."/>
            <person name="Dufresne M."/>
            <person name="Freitag M."/>
            <person name="Grabherr M."/>
            <person name="Henrissat B."/>
            <person name="Houterman P.M."/>
            <person name="Kang S."/>
            <person name="Shim W.-B."/>
            <person name="Woloshuk C."/>
            <person name="Xie X."/>
            <person name="Xu J.-R."/>
            <person name="Antoniw J."/>
            <person name="Baker S.E."/>
            <person name="Bluhm B.H."/>
            <person name="Breakspear A."/>
            <person name="Brown D.W."/>
            <person name="Butchko R.A.E."/>
            <person name="Chapman S."/>
            <person name="Coulson R."/>
            <person name="Coutinho P.M."/>
            <person name="Danchin E.G.J."/>
            <person name="Diener A."/>
            <person name="Gale L.R."/>
            <person name="Gardiner D.M."/>
            <person name="Goff S."/>
            <person name="Hammond-Kosack K.E."/>
            <person name="Hilburn K."/>
            <person name="Hua-Van A."/>
            <person name="Jonkers W."/>
            <person name="Kazan K."/>
            <person name="Kodira C.D."/>
            <person name="Koehrsen M."/>
            <person name="Kumar L."/>
            <person name="Lee Y.-H."/>
            <person name="Li L."/>
            <person name="Manners J.M."/>
            <person name="Miranda-Saavedra D."/>
            <person name="Mukherjee M."/>
            <person name="Park G."/>
            <person name="Park J."/>
            <person name="Park S.-Y."/>
            <person name="Proctor R.H."/>
            <person name="Regev A."/>
            <person name="Ruiz-Roldan M.C."/>
            <person name="Sain D."/>
            <person name="Sakthikumar S."/>
            <person name="Sykes S."/>
            <person name="Schwartz D.C."/>
            <person name="Turgeon B.G."/>
            <person name="Wapinski I."/>
            <person name="Yoder O."/>
            <person name="Young S."/>
            <person name="Zeng Q."/>
            <person name="Zhou S."/>
            <person name="Galagan J."/>
            <person name="Cuomo C.A."/>
            <person name="Kistler H.C."/>
            <person name="Rep M."/>
        </authorList>
    </citation>
    <scope>GENOME REANNOTATION</scope>
    <source>
        <strain>ATCC MYA-4620 / CBS 123657 / FGSC 9075 / NRRL 31084 / PH-1</strain>
    </source>
</reference>
<reference key="3">
    <citation type="journal article" date="2015" name="BMC Genomics">
        <title>The completed genome sequence of the pathogenic ascomycete fungus Fusarium graminearum.</title>
        <authorList>
            <person name="King R."/>
            <person name="Urban M."/>
            <person name="Hammond-Kosack M.C.U."/>
            <person name="Hassani-Pak K."/>
            <person name="Hammond-Kosack K.E."/>
        </authorList>
    </citation>
    <scope>NUCLEOTIDE SEQUENCE [LARGE SCALE GENOMIC DNA]</scope>
    <source>
        <strain>ATCC MYA-4620 / CBS 123657 / FGSC 9075 / NRRL 31084 / PH-1</strain>
    </source>
</reference>
<reference key="4">
    <citation type="journal article" date="2012" name="Fungal Genet. Biol.">
        <title>FgVELB is associated with vegetative differentiation, secondary metabolism and virulence in Fusarium graminearum.</title>
        <authorList>
            <person name="Jiang J."/>
            <person name="Yun Y."/>
            <person name="Liu Y."/>
            <person name="Ma Z."/>
        </authorList>
    </citation>
    <scope>FUNCTION</scope>
    <scope>DISRUPTION PHENOTYPE</scope>
</reference>
<feature type="chain" id="PRO_0000435783" description="Velvet complex subunit B">
    <location>
        <begin position="1"/>
        <end position="470"/>
    </location>
</feature>
<feature type="domain" description="Velvet" evidence="2">
    <location>
        <begin position="147"/>
        <end position="452"/>
    </location>
</feature>
<feature type="region of interest" description="Disordered" evidence="3">
    <location>
        <begin position="1"/>
        <end position="148"/>
    </location>
</feature>
<feature type="region of interest" description="Disordered" evidence="3">
    <location>
        <begin position="223"/>
        <end position="321"/>
    </location>
</feature>
<feature type="compositionally biased region" description="Low complexity" evidence="3">
    <location>
        <begin position="15"/>
        <end position="37"/>
    </location>
</feature>
<feature type="compositionally biased region" description="Pro residues" evidence="3">
    <location>
        <begin position="38"/>
        <end position="49"/>
    </location>
</feature>
<feature type="compositionally biased region" description="Basic residues" evidence="3">
    <location>
        <begin position="74"/>
        <end position="86"/>
    </location>
</feature>
<feature type="compositionally biased region" description="Pro residues" evidence="3">
    <location>
        <begin position="102"/>
        <end position="124"/>
    </location>
</feature>
<feature type="compositionally biased region" description="Low complexity" evidence="3">
    <location>
        <begin position="232"/>
        <end position="241"/>
    </location>
</feature>
<feature type="compositionally biased region" description="Polar residues" evidence="3">
    <location>
        <begin position="242"/>
        <end position="255"/>
    </location>
</feature>
<feature type="compositionally biased region" description="Low complexity" evidence="3">
    <location>
        <begin position="280"/>
        <end position="301"/>
    </location>
</feature>
<feature type="compositionally biased region" description="Polar residues" evidence="3">
    <location>
        <begin position="307"/>
        <end position="318"/>
    </location>
</feature>